<sequence>MSLSTEKKAAIVAEFGRDAKDTGSSEVQIALLTAQINHLQTHFAEHKKDHHGRRGLLRMVSRRRKLLDYLKRTDLALYQSTIARLGLRR</sequence>
<organism>
    <name type="scientific">Haemophilus influenzae (strain PittGG)</name>
    <dbReference type="NCBI Taxonomy" id="374931"/>
    <lineage>
        <taxon>Bacteria</taxon>
        <taxon>Pseudomonadati</taxon>
        <taxon>Pseudomonadota</taxon>
        <taxon>Gammaproteobacteria</taxon>
        <taxon>Pasteurellales</taxon>
        <taxon>Pasteurellaceae</taxon>
        <taxon>Haemophilus</taxon>
    </lineage>
</organism>
<keyword id="KW-0687">Ribonucleoprotein</keyword>
<keyword id="KW-0689">Ribosomal protein</keyword>
<keyword id="KW-0694">RNA-binding</keyword>
<keyword id="KW-0699">rRNA-binding</keyword>
<evidence type="ECO:0000255" key="1">
    <source>
        <dbReference type="HAMAP-Rule" id="MF_01343"/>
    </source>
</evidence>
<evidence type="ECO:0000305" key="2"/>
<proteinExistence type="inferred from homology"/>
<accession>A5UEY4</accession>
<reference key="1">
    <citation type="journal article" date="2007" name="Genome Biol.">
        <title>Characterization and modeling of the Haemophilus influenzae core and supragenomes based on the complete genomic sequences of Rd and 12 clinical nontypeable strains.</title>
        <authorList>
            <person name="Hogg J.S."/>
            <person name="Hu F.Z."/>
            <person name="Janto B."/>
            <person name="Boissy R."/>
            <person name="Hayes J."/>
            <person name="Keefe R."/>
            <person name="Post J.C."/>
            <person name="Ehrlich G.D."/>
        </authorList>
    </citation>
    <scope>NUCLEOTIDE SEQUENCE [LARGE SCALE GENOMIC DNA]</scope>
    <source>
        <strain>PittGG</strain>
    </source>
</reference>
<name>RS15_HAEIG</name>
<dbReference type="EMBL" id="CP000672">
    <property type="protein sequence ID" value="ABQ99339.1"/>
    <property type="molecule type" value="Genomic_DNA"/>
</dbReference>
<dbReference type="SMR" id="A5UEY4"/>
<dbReference type="KEGG" id="hiq:CGSHiGG_01250"/>
<dbReference type="HOGENOM" id="CLU_148518_0_0_6"/>
<dbReference type="Proteomes" id="UP000001990">
    <property type="component" value="Chromosome"/>
</dbReference>
<dbReference type="GO" id="GO:0022627">
    <property type="term" value="C:cytosolic small ribosomal subunit"/>
    <property type="evidence" value="ECO:0007669"/>
    <property type="project" value="TreeGrafter"/>
</dbReference>
<dbReference type="GO" id="GO:0019843">
    <property type="term" value="F:rRNA binding"/>
    <property type="evidence" value="ECO:0007669"/>
    <property type="project" value="UniProtKB-UniRule"/>
</dbReference>
<dbReference type="GO" id="GO:0003735">
    <property type="term" value="F:structural constituent of ribosome"/>
    <property type="evidence" value="ECO:0007669"/>
    <property type="project" value="InterPro"/>
</dbReference>
<dbReference type="GO" id="GO:0006412">
    <property type="term" value="P:translation"/>
    <property type="evidence" value="ECO:0007669"/>
    <property type="project" value="UniProtKB-UniRule"/>
</dbReference>
<dbReference type="CDD" id="cd00353">
    <property type="entry name" value="Ribosomal_S15p_S13e"/>
    <property type="match status" value="1"/>
</dbReference>
<dbReference type="FunFam" id="1.10.287.10:FF:000002">
    <property type="entry name" value="30S ribosomal protein S15"/>
    <property type="match status" value="1"/>
</dbReference>
<dbReference type="Gene3D" id="6.10.250.3130">
    <property type="match status" value="1"/>
</dbReference>
<dbReference type="Gene3D" id="1.10.287.10">
    <property type="entry name" value="S15/NS1, RNA-binding"/>
    <property type="match status" value="1"/>
</dbReference>
<dbReference type="HAMAP" id="MF_01343_B">
    <property type="entry name" value="Ribosomal_uS15_B"/>
    <property type="match status" value="1"/>
</dbReference>
<dbReference type="InterPro" id="IPR000589">
    <property type="entry name" value="Ribosomal_uS15"/>
</dbReference>
<dbReference type="InterPro" id="IPR005290">
    <property type="entry name" value="Ribosomal_uS15_bac-type"/>
</dbReference>
<dbReference type="InterPro" id="IPR009068">
    <property type="entry name" value="uS15_NS1_RNA-bd_sf"/>
</dbReference>
<dbReference type="NCBIfam" id="TIGR00952">
    <property type="entry name" value="S15_bact"/>
    <property type="match status" value="1"/>
</dbReference>
<dbReference type="PANTHER" id="PTHR23321">
    <property type="entry name" value="RIBOSOMAL PROTEIN S15, BACTERIAL AND ORGANELLAR"/>
    <property type="match status" value="1"/>
</dbReference>
<dbReference type="PANTHER" id="PTHR23321:SF26">
    <property type="entry name" value="SMALL RIBOSOMAL SUBUNIT PROTEIN US15M"/>
    <property type="match status" value="1"/>
</dbReference>
<dbReference type="Pfam" id="PF00312">
    <property type="entry name" value="Ribosomal_S15"/>
    <property type="match status" value="1"/>
</dbReference>
<dbReference type="SMART" id="SM01387">
    <property type="entry name" value="Ribosomal_S15"/>
    <property type="match status" value="1"/>
</dbReference>
<dbReference type="SUPFAM" id="SSF47060">
    <property type="entry name" value="S15/NS1 RNA-binding domain"/>
    <property type="match status" value="1"/>
</dbReference>
<dbReference type="PROSITE" id="PS00362">
    <property type="entry name" value="RIBOSOMAL_S15"/>
    <property type="match status" value="1"/>
</dbReference>
<gene>
    <name evidence="1" type="primary">rpsO</name>
    <name type="ordered locus">CGSHiGG_01250</name>
</gene>
<feature type="chain" id="PRO_1000054791" description="Small ribosomal subunit protein uS15">
    <location>
        <begin position="1"/>
        <end position="89"/>
    </location>
</feature>
<protein>
    <recommendedName>
        <fullName evidence="1">Small ribosomal subunit protein uS15</fullName>
    </recommendedName>
    <alternativeName>
        <fullName evidence="2">30S ribosomal protein S15</fullName>
    </alternativeName>
</protein>
<comment type="function">
    <text evidence="1">One of the primary rRNA binding proteins, it binds directly to 16S rRNA where it helps nucleate assembly of the platform of the 30S subunit by binding and bridging several RNA helices of the 16S rRNA.</text>
</comment>
<comment type="function">
    <text evidence="1">Forms an intersubunit bridge (bridge B4) with the 23S rRNA of the 50S subunit in the ribosome.</text>
</comment>
<comment type="subunit">
    <text evidence="1">Part of the 30S ribosomal subunit. Forms a bridge to the 50S subunit in the 70S ribosome, contacting the 23S rRNA.</text>
</comment>
<comment type="similarity">
    <text evidence="1">Belongs to the universal ribosomal protein uS15 family.</text>
</comment>